<organism>
    <name type="scientific">Oryza sativa subsp. japonica</name>
    <name type="common">Rice</name>
    <dbReference type="NCBI Taxonomy" id="39947"/>
    <lineage>
        <taxon>Eukaryota</taxon>
        <taxon>Viridiplantae</taxon>
        <taxon>Streptophyta</taxon>
        <taxon>Embryophyta</taxon>
        <taxon>Tracheophyta</taxon>
        <taxon>Spermatophyta</taxon>
        <taxon>Magnoliopsida</taxon>
        <taxon>Liliopsida</taxon>
        <taxon>Poales</taxon>
        <taxon>Poaceae</taxon>
        <taxon>BOP clade</taxon>
        <taxon>Oryzoideae</taxon>
        <taxon>Oryzeae</taxon>
        <taxon>Oryzinae</taxon>
        <taxon>Oryza</taxon>
        <taxon>Oryza sativa</taxon>
    </lineage>
</organism>
<gene>
    <name evidence="8" type="primary">CRO1</name>
    <name evidence="10" type="synonym">pp56</name>
    <name type="ordered locus">Os07g0246200</name>
    <name type="ordered locus">LOC_Os07g14270</name>
    <name type="ORF">OJ1058_C08.34-1</name>
    <name type="ORF">OJ1058_C08.34-2</name>
    <name type="ORF">OSJNBa0003K21.18-1</name>
    <name type="ORF">OSJNBa0003K21.18-2</name>
</gene>
<accession>Q9SLY8</accession>
<accession>Q6ZLM7</accession>
<accession>Q6ZLM8</accession>
<protein>
    <recommendedName>
        <fullName evidence="8">Calreticulin</fullName>
    </recommendedName>
    <alternativeName>
        <fullName evidence="10">56 kDa protein</fullName>
    </alternativeName>
</protein>
<keyword id="KW-0025">Alternative splicing</keyword>
<keyword id="KW-0106">Calcium</keyword>
<keyword id="KW-0143">Chaperone</keyword>
<keyword id="KW-0903">Direct protein sequencing</keyword>
<keyword id="KW-1015">Disulfide bond</keyword>
<keyword id="KW-0256">Endoplasmic reticulum</keyword>
<keyword id="KW-0325">Glycoprotein</keyword>
<keyword id="KW-0430">Lectin</keyword>
<keyword id="KW-0479">Metal-binding</keyword>
<keyword id="KW-0597">Phosphoprotein</keyword>
<keyword id="KW-1185">Reference proteome</keyword>
<keyword id="KW-0677">Repeat</keyword>
<keyword id="KW-0732">Signal</keyword>
<keyword id="KW-0862">Zinc</keyword>
<sequence>MAIRARSSSYAAAAVALALALASVAAVAGEVFFQEKFEDGWESRWVKSEWKKDENMAGEWNHTSGKWNGDPEDKGIQTSEDYRFYAISAEYPEFSNKDKTLVLQFSVKHEQKLDCGGGYVKLLGGDVDQKKFGGDTPYSIMFGPDICGYSTKKVHTIFTKNDKNHLIKKDVPCETDQLSHVYTLIIHPDATYTILIDNVEKQSGSIYEHWDILPPKQIKDPEAKKPEDWDDKEYIPDPEDKKPEGYDDIPKEIPDPDAKKPEDWDDEEDGEWTAPTIPNPEYKGPWKQKKIKNPNYQGKWKAPMIDNPDFKDDPYIYAFDSLKYIGIELWQVKSGTLFDNFLITDDPELAKTFAEETWGKHKDAEKAAFDEAEKKKEEEEAAKAGEDDDDLDDEDAEDEDKADEKADSDAEDGKDSDDEKHDEL</sequence>
<dbReference type="EMBL" id="AB021259">
    <property type="protein sequence ID" value="BAA88900.1"/>
    <property type="molecule type" value="mRNA"/>
</dbReference>
<dbReference type="EMBL" id="AP003738">
    <property type="protein sequence ID" value="BAC82932.1"/>
    <property type="molecule type" value="Genomic_DNA"/>
</dbReference>
<dbReference type="EMBL" id="AP003738">
    <property type="protein sequence ID" value="BAC82933.1"/>
    <property type="molecule type" value="Genomic_DNA"/>
</dbReference>
<dbReference type="EMBL" id="AP006266">
    <property type="protein sequence ID" value="BAD31961.1"/>
    <property type="molecule type" value="Genomic_DNA"/>
</dbReference>
<dbReference type="EMBL" id="AP006266">
    <property type="protein sequence ID" value="BAD31962.1"/>
    <property type="molecule type" value="Genomic_DNA"/>
</dbReference>
<dbReference type="EMBL" id="AP014963">
    <property type="protein sequence ID" value="BAT00809.1"/>
    <property type="molecule type" value="Genomic_DNA"/>
</dbReference>
<dbReference type="EMBL" id="AP014963">
    <property type="protein sequence ID" value="BAT00810.1"/>
    <property type="molecule type" value="Genomic_DNA"/>
</dbReference>
<dbReference type="EMBL" id="AK065341">
    <property type="status" value="NOT_ANNOTATED_CDS"/>
    <property type="molecule type" value="mRNA"/>
</dbReference>
<dbReference type="EMBL" id="AK104328">
    <property type="status" value="NOT_ANNOTATED_CDS"/>
    <property type="molecule type" value="mRNA"/>
</dbReference>
<dbReference type="RefSeq" id="NP_001389969.1">
    <molecule id="Q9SLY8-1"/>
    <property type="nucleotide sequence ID" value="NM_001403040.1"/>
</dbReference>
<dbReference type="RefSeq" id="XP_015647166.1">
    <molecule id="Q9SLY8-2"/>
    <property type="nucleotide sequence ID" value="XM_015791680.3"/>
</dbReference>
<dbReference type="RefSeq" id="XP_015647167.1">
    <property type="nucleotide sequence ID" value="XM_015791681.1"/>
</dbReference>
<dbReference type="SMR" id="Q9SLY8"/>
<dbReference type="FunCoup" id="Q9SLY8">
    <property type="interactions" value="2620"/>
</dbReference>
<dbReference type="STRING" id="39947.Q9SLY8"/>
<dbReference type="GlyCosmos" id="Q9SLY8">
    <property type="glycosylation" value="1 site, No reported glycans"/>
</dbReference>
<dbReference type="PaxDb" id="39947-Q9SLY8"/>
<dbReference type="EnsemblPlants" id="Os07t0246200-01">
    <molecule id="Q9SLY8-1"/>
    <property type="protein sequence ID" value="Os07t0246200-01"/>
    <property type="gene ID" value="Os07g0246200"/>
</dbReference>
<dbReference type="EnsemblPlants" id="Os07t0246200-02">
    <molecule id="Q9SLY8-1"/>
    <property type="protein sequence ID" value="Os07t0246200-02"/>
    <property type="gene ID" value="Os07g0246200"/>
</dbReference>
<dbReference type="GeneID" id="4342826"/>
<dbReference type="Gramene" id="Os07t0246200-01">
    <molecule id="Q9SLY8-1"/>
    <property type="protein sequence ID" value="Os07t0246200-01"/>
    <property type="gene ID" value="Os07g0246200"/>
</dbReference>
<dbReference type="Gramene" id="Os07t0246200-02">
    <molecule id="Q9SLY8-1"/>
    <property type="protein sequence ID" value="Os07t0246200-02"/>
    <property type="gene ID" value="Os07g0246200"/>
</dbReference>
<dbReference type="eggNOG" id="KOG0674">
    <property type="taxonomic scope" value="Eukaryota"/>
</dbReference>
<dbReference type="HOGENOM" id="CLU_018224_0_2_1"/>
<dbReference type="InParanoid" id="Q9SLY8"/>
<dbReference type="OMA" id="SRAAKFP"/>
<dbReference type="OrthoDB" id="1938156at2759"/>
<dbReference type="Proteomes" id="UP000000763">
    <property type="component" value="Chromosome 7"/>
</dbReference>
<dbReference type="Proteomes" id="UP000059680">
    <property type="component" value="Chromosome 7"/>
</dbReference>
<dbReference type="ExpressionAtlas" id="Q9SLY8">
    <property type="expression patterns" value="baseline and differential"/>
</dbReference>
<dbReference type="GO" id="GO:0005788">
    <property type="term" value="C:endoplasmic reticulum lumen"/>
    <property type="evidence" value="ECO:0000250"/>
    <property type="project" value="Gramene"/>
</dbReference>
<dbReference type="GO" id="GO:0005789">
    <property type="term" value="C:endoplasmic reticulum membrane"/>
    <property type="evidence" value="ECO:0000318"/>
    <property type="project" value="GO_Central"/>
</dbReference>
<dbReference type="GO" id="GO:0005509">
    <property type="term" value="F:calcium ion binding"/>
    <property type="evidence" value="ECO:0000250"/>
    <property type="project" value="Gramene"/>
</dbReference>
<dbReference type="GO" id="GO:0030246">
    <property type="term" value="F:carbohydrate binding"/>
    <property type="evidence" value="ECO:0007669"/>
    <property type="project" value="UniProtKB-KW"/>
</dbReference>
<dbReference type="GO" id="GO:0051082">
    <property type="term" value="F:unfolded protein binding"/>
    <property type="evidence" value="ECO:0000250"/>
    <property type="project" value="Gramene"/>
</dbReference>
<dbReference type="GO" id="GO:0036503">
    <property type="term" value="P:ERAD pathway"/>
    <property type="evidence" value="ECO:0000318"/>
    <property type="project" value="GO_Central"/>
</dbReference>
<dbReference type="GO" id="GO:0006457">
    <property type="term" value="P:protein folding"/>
    <property type="evidence" value="ECO:0000318"/>
    <property type="project" value="GO_Central"/>
</dbReference>
<dbReference type="FunFam" id="2.10.250.10:FF:000002">
    <property type="entry name" value="Calreticulin"/>
    <property type="match status" value="1"/>
</dbReference>
<dbReference type="FunFam" id="2.60.120.200:FF:000018">
    <property type="entry name" value="Calreticulin 1b"/>
    <property type="match status" value="1"/>
</dbReference>
<dbReference type="FunFam" id="2.60.120.200:FF:000339">
    <property type="entry name" value="Calreticulin 3"/>
    <property type="match status" value="1"/>
</dbReference>
<dbReference type="Gene3D" id="2.60.120.200">
    <property type="match status" value="1"/>
</dbReference>
<dbReference type="Gene3D" id="2.10.250.10">
    <property type="entry name" value="Calreticulin/calnexin, P domain"/>
    <property type="match status" value="1"/>
</dbReference>
<dbReference type="InterPro" id="IPR001580">
    <property type="entry name" value="Calret/calnex"/>
</dbReference>
<dbReference type="InterPro" id="IPR018124">
    <property type="entry name" value="Calret/calnex_CS"/>
</dbReference>
<dbReference type="InterPro" id="IPR009169">
    <property type="entry name" value="Calreticulin"/>
</dbReference>
<dbReference type="InterPro" id="IPR009033">
    <property type="entry name" value="Calreticulin/calnexin_P_dom_sf"/>
</dbReference>
<dbReference type="InterPro" id="IPR013320">
    <property type="entry name" value="ConA-like_dom_sf"/>
</dbReference>
<dbReference type="PANTHER" id="PTHR11073:SF2">
    <property type="entry name" value="CALRETICULIN"/>
    <property type="match status" value="1"/>
</dbReference>
<dbReference type="PANTHER" id="PTHR11073">
    <property type="entry name" value="CALRETICULIN AND CALNEXIN"/>
    <property type="match status" value="1"/>
</dbReference>
<dbReference type="Pfam" id="PF00262">
    <property type="entry name" value="Calreticulin"/>
    <property type="match status" value="2"/>
</dbReference>
<dbReference type="PIRSF" id="PIRSF002356">
    <property type="entry name" value="Calreticulin"/>
    <property type="match status" value="1"/>
</dbReference>
<dbReference type="PRINTS" id="PR00626">
    <property type="entry name" value="CALRETICULIN"/>
</dbReference>
<dbReference type="SUPFAM" id="SSF49899">
    <property type="entry name" value="Concanavalin A-like lectins/glucanases"/>
    <property type="match status" value="1"/>
</dbReference>
<dbReference type="SUPFAM" id="SSF63887">
    <property type="entry name" value="P-domain of calnexin/calreticulin"/>
    <property type="match status" value="1"/>
</dbReference>
<dbReference type="PROSITE" id="PS00803">
    <property type="entry name" value="CALRETICULIN_1"/>
    <property type="match status" value="1"/>
</dbReference>
<dbReference type="PROSITE" id="PS00804">
    <property type="entry name" value="CALRETICULIN_2"/>
    <property type="match status" value="1"/>
</dbReference>
<dbReference type="PROSITE" id="PS00805">
    <property type="entry name" value="CALRETICULIN_REPEAT"/>
    <property type="match status" value="2"/>
</dbReference>
<dbReference type="PROSITE" id="PS00014">
    <property type="entry name" value="ER_TARGET"/>
    <property type="match status" value="1"/>
</dbReference>
<proteinExistence type="evidence at protein level"/>
<reference key="1">
    <citation type="journal article" date="2000" name="Eur. J. Biochem.">
        <title>Molecular cloning and characterization of calreticulin, a calcium-binding protein involved in the regeneration of rice cultured suspension cells.</title>
        <authorList>
            <person name="Li Z."/>
            <person name="Komatsu S."/>
        </authorList>
    </citation>
    <scope>NUCLEOTIDE SEQUENCE [MRNA] (ISOFORM 1)</scope>
    <source>
        <strain>cv. Nipponbare</strain>
    </source>
</reference>
<reference key="2">
    <citation type="journal article" date="2005" name="Nature">
        <title>The map-based sequence of the rice genome.</title>
        <authorList>
            <consortium name="International rice genome sequencing project (IRGSP)"/>
        </authorList>
    </citation>
    <scope>NUCLEOTIDE SEQUENCE [LARGE SCALE GENOMIC DNA]</scope>
    <source>
        <strain>cv. Nipponbare</strain>
    </source>
</reference>
<reference key="3">
    <citation type="journal article" date="2013" name="Rice">
        <title>Improvement of the Oryza sativa Nipponbare reference genome using next generation sequence and optical map data.</title>
        <authorList>
            <person name="Kawahara Y."/>
            <person name="de la Bastide M."/>
            <person name="Hamilton J.P."/>
            <person name="Kanamori H."/>
            <person name="McCombie W.R."/>
            <person name="Ouyang S."/>
            <person name="Schwartz D.C."/>
            <person name="Tanaka T."/>
            <person name="Wu J."/>
            <person name="Zhou S."/>
            <person name="Childs K.L."/>
            <person name="Davidson R.M."/>
            <person name="Lin H."/>
            <person name="Quesada-Ocampo L."/>
            <person name="Vaillancourt B."/>
            <person name="Sakai H."/>
            <person name="Lee S.S."/>
            <person name="Kim J."/>
            <person name="Numa H."/>
            <person name="Itoh T."/>
            <person name="Buell C.R."/>
            <person name="Matsumoto T."/>
        </authorList>
    </citation>
    <scope>GENOME REANNOTATION</scope>
    <source>
        <strain>cv. Nipponbare</strain>
    </source>
</reference>
<reference key="4">
    <citation type="journal article" date="2003" name="Science">
        <title>Collection, mapping, and annotation of over 28,000 cDNA clones from japonica rice.</title>
        <authorList>
            <consortium name="The rice full-length cDNA consortium"/>
        </authorList>
    </citation>
    <scope>NUCLEOTIDE SEQUENCE [LARGE SCALE MRNA] (ISOFORMS 1 AND 2)</scope>
    <source>
        <strain>cv. Nipponbare</strain>
    </source>
</reference>
<reference key="5">
    <citation type="journal article" date="2004" name="Nucleic Acids Res.">
        <title>Rice proteome database based on two-dimensional polyacrylamide gel electrophoresis: its status in 2003.</title>
        <authorList>
            <person name="Komatsu S."/>
            <person name="Kojima K."/>
            <person name="Suzuki K."/>
            <person name="Ozaki K."/>
            <person name="Higo K."/>
        </authorList>
    </citation>
    <scope>PROTEIN SEQUENCE OF 30-39; 81-90; 94-103; 111-120 AND 245-253</scope>
    <source>
        <strain>cv. Nipponbare</strain>
        <tissue>Anther</tissue>
        <tissue>Embryo</tissue>
        <tissue>Panicle</tissue>
        <tissue>Sheath</tissue>
        <tissue>Stem</tissue>
    </source>
</reference>
<reference key="6">
    <citation type="journal article" date="1996" name="Plant Cell Physiol.">
        <title>Phosphorylation of a protein (pp56) is related to the regeneration of rice cultured suspension cells.</title>
        <authorList>
            <person name="Komatsu S."/>
            <person name="Masuda T."/>
            <person name="Abe K."/>
        </authorList>
    </citation>
    <scope>PROTEIN SEQUENCE OF 30-39; 93-103; 110-120 AND 244-254</scope>
    <scope>PHOSPHORYLATION</scope>
    <source>
        <strain>cv. Nipponbare</strain>
    </source>
</reference>
<feature type="signal peptide" evidence="6">
    <location>
        <begin position="1"/>
        <end position="29"/>
    </location>
</feature>
<feature type="chain" id="PRO_0000004193" description="Calreticulin">
    <location>
        <begin position="30"/>
        <end position="424"/>
    </location>
</feature>
<feature type="repeat" description="1-1">
    <location>
        <begin position="201"/>
        <end position="212"/>
    </location>
</feature>
<feature type="repeat" description="1-2">
    <location>
        <begin position="220"/>
        <end position="231"/>
    </location>
</feature>
<feature type="repeat" description="1-3">
    <location>
        <begin position="237"/>
        <end position="248"/>
    </location>
</feature>
<feature type="repeat" description="1-4">
    <location>
        <begin position="255"/>
        <end position="266"/>
    </location>
</feature>
<feature type="repeat" description="2-1">
    <location>
        <begin position="270"/>
        <end position="280"/>
    </location>
</feature>
<feature type="repeat" description="2-2">
    <location>
        <begin position="284"/>
        <end position="294"/>
    </location>
</feature>
<feature type="repeat" description="2-3">
    <location>
        <begin position="298"/>
        <end position="308"/>
    </location>
</feature>
<feature type="region of interest" description="4 X approximate repeats">
    <location>
        <begin position="201"/>
        <end position="266"/>
    </location>
</feature>
<feature type="region of interest" description="Disordered" evidence="5">
    <location>
        <begin position="217"/>
        <end position="289"/>
    </location>
</feature>
<feature type="region of interest" description="3 X approximate repeats">
    <location>
        <begin position="270"/>
        <end position="308"/>
    </location>
</feature>
<feature type="region of interest" description="Disordered" evidence="5">
    <location>
        <begin position="356"/>
        <end position="424"/>
    </location>
</feature>
<feature type="short sequence motif" description="Prevents secretion from ER" evidence="4">
    <location>
        <begin position="421"/>
        <end position="424"/>
    </location>
</feature>
<feature type="compositionally biased region" description="Basic and acidic residues" evidence="5">
    <location>
        <begin position="217"/>
        <end position="262"/>
    </location>
</feature>
<feature type="compositionally biased region" description="Basic and acidic residues" evidence="5">
    <location>
        <begin position="356"/>
        <end position="385"/>
    </location>
</feature>
<feature type="compositionally biased region" description="Acidic residues" evidence="5">
    <location>
        <begin position="386"/>
        <end position="401"/>
    </location>
</feature>
<feature type="compositionally biased region" description="Basic and acidic residues" evidence="5">
    <location>
        <begin position="402"/>
        <end position="424"/>
    </location>
</feature>
<feature type="binding site" evidence="2">
    <location>
        <position position="119"/>
    </location>
    <ligand>
        <name>an alpha-D-glucoside</name>
        <dbReference type="ChEBI" id="CHEBI:22390"/>
    </ligand>
</feature>
<feature type="binding site" evidence="2">
    <location>
        <position position="121"/>
    </location>
    <ligand>
        <name>an alpha-D-glucoside</name>
        <dbReference type="ChEBI" id="CHEBI:22390"/>
    </ligand>
</feature>
<feature type="binding site" evidence="2">
    <location>
        <position position="138"/>
    </location>
    <ligand>
        <name>an alpha-D-glucoside</name>
        <dbReference type="ChEBI" id="CHEBI:22390"/>
    </ligand>
</feature>
<feature type="binding site" evidence="2">
    <location>
        <position position="145"/>
    </location>
    <ligand>
        <name>an alpha-D-glucoside</name>
        <dbReference type="ChEBI" id="CHEBI:22390"/>
    </ligand>
</feature>
<feature type="binding site" evidence="2">
    <location>
        <position position="328"/>
    </location>
    <ligand>
        <name>an alpha-D-glucoside</name>
        <dbReference type="ChEBI" id="CHEBI:22390"/>
    </ligand>
</feature>
<feature type="glycosylation site" description="N-linked (GlcNAc...) asparagine" evidence="3">
    <location>
        <position position="61"/>
    </location>
</feature>
<feature type="disulfide bond" evidence="1">
    <location>
        <begin position="115"/>
        <end position="147"/>
    </location>
</feature>
<feature type="splice variant" id="VSP_016726" description="In isoform 2." evidence="9">
    <original>DEL</original>
    <variation>VCNTPAFS</variation>
    <location>
        <begin position="422"/>
        <end position="424"/>
    </location>
</feature>
<feature type="sequence conflict" description="In Ref. 1; BAA88900." evidence="11" ref="1">
    <original>T</original>
    <variation>S</variation>
    <location>
        <position position="193"/>
    </location>
</feature>
<feature type="sequence conflict" description="In Ref. 1; BAA88900." evidence="11" ref="1">
    <original>DWD</original>
    <variation>AGA</variation>
    <location>
        <begin position="263"/>
        <end position="265"/>
    </location>
</feature>
<feature type="sequence conflict" description="In Ref. 1; BAA88900." evidence="11" ref="1">
    <original>P</original>
    <variation>R</variation>
    <location>
        <position position="278"/>
    </location>
</feature>
<feature type="sequence conflict" description="In Ref. 1; BAA88900." evidence="11" ref="1">
    <original>A</original>
    <variation>P</variation>
    <location>
        <position position="302"/>
    </location>
</feature>
<feature type="sequence conflict" description="In Ref. 1; BAA88900." evidence="11" ref="1">
    <original>DN</original>
    <variation>AT</variation>
    <location>
        <begin position="306"/>
        <end position="307"/>
    </location>
</feature>
<feature type="sequence conflict" description="In Ref. 1; BAA88900." evidence="11" ref="1">
    <original>K</original>
    <variation>Q</variation>
    <location>
        <position position="311"/>
    </location>
</feature>
<feature type="sequence conflict" description="In Ref. 1; BAA88900." evidence="11" ref="1">
    <original>Y</original>
    <variation>S</variation>
    <location>
        <position position="324"/>
    </location>
</feature>
<feature type="sequence conflict" description="In Ref. 1; BAA88900." evidence="11" ref="1">
    <original>F</original>
    <variation>I</variation>
    <location>
        <position position="341"/>
    </location>
</feature>
<feature type="sequence conflict" description="In Ref. 1; BAA88900." evidence="11" ref="1">
    <original>PE</original>
    <variation>AA</variation>
    <location>
        <begin position="347"/>
        <end position="348"/>
    </location>
</feature>
<feature type="sequence conflict" description="In Ref. 1; BAA88900." evidence="11" ref="1">
    <original>G</original>
    <variation>A</variation>
    <location>
        <position position="359"/>
    </location>
</feature>
<evidence type="ECO:0000250" key="1"/>
<evidence type="ECO:0000250" key="2">
    <source>
        <dbReference type="UniProtKB" id="P14211"/>
    </source>
</evidence>
<evidence type="ECO:0000255" key="3"/>
<evidence type="ECO:0000255" key="4">
    <source>
        <dbReference type="PROSITE-ProRule" id="PRU10138"/>
    </source>
</evidence>
<evidence type="ECO:0000256" key="5">
    <source>
        <dbReference type="SAM" id="MobiDB-lite"/>
    </source>
</evidence>
<evidence type="ECO:0000269" key="6">
    <source>
    </source>
</evidence>
<evidence type="ECO:0000269" key="7">
    <source>
    </source>
</evidence>
<evidence type="ECO:0000303" key="8">
    <source>
    </source>
</evidence>
<evidence type="ECO:0000303" key="9">
    <source>
    </source>
</evidence>
<evidence type="ECO:0000303" key="10">
    <source>
    </source>
</evidence>
<evidence type="ECO:0000305" key="11"/>
<name>CALR_ORYSJ</name>
<comment type="function">
    <text evidence="1">Molecular calcium-binding chaperone promoting folding, oligomeric assembly and quality control in the ER via the calreticulin/calnexin cycle. This lectin may interact transiently with almost all of the monoglucosylated glycoproteins that are synthesized in the ER (By similarity).</text>
</comment>
<comment type="subcellular location">
    <subcellularLocation>
        <location evidence="4">Endoplasmic reticulum lumen</location>
    </subcellularLocation>
</comment>
<comment type="alternative products">
    <event type="alternative splicing"/>
    <isoform>
        <id>Q9SLY8-1</id>
        <name>1</name>
        <sequence type="displayed"/>
    </isoform>
    <isoform>
        <id>Q9SLY8-2</id>
        <name>2</name>
        <sequence type="described" ref="VSP_016726"/>
    </isoform>
</comment>
<comment type="domain">
    <text evidence="1">Can be divided into a N-terminal globular domain, a proline-rich P-domain forming an elongated arm-like structure and a C-terminal acidic domain. The P-domain binds one molecule of calcium with high affinity, whereas the acidic C-domain binds multiple calcium ions with low affinity (By similarity).</text>
</comment>
<comment type="domain">
    <text evidence="1">The interaction with glycans occurs through a binding site in the globular lectin domain.</text>
</comment>
<comment type="domain">
    <text evidence="1">The zinc binding sites are localized to the N-domain.</text>
</comment>
<comment type="PTM">
    <text evidence="7">Phosphorylated.</text>
</comment>
<comment type="similarity">
    <text evidence="11">Belongs to the calreticulin family.</text>
</comment>